<keyword id="KW-0227">DNA damage</keyword>
<keyword id="KW-0234">DNA repair</keyword>
<keyword id="KW-0235">DNA replication</keyword>
<keyword id="KW-0436">Ligase</keyword>
<keyword id="KW-0460">Magnesium</keyword>
<keyword id="KW-0464">Manganese</keyword>
<keyword id="KW-0479">Metal-binding</keyword>
<keyword id="KW-0520">NAD</keyword>
<keyword id="KW-0862">Zinc</keyword>
<reference key="1">
    <citation type="journal article" date="2008" name="J. Bacteriol.">
        <title>Genome sequence of a nephritogenic and highly transformable M49 strain of Streptococcus pyogenes.</title>
        <authorList>
            <person name="McShan W.M."/>
            <person name="Ferretti J.J."/>
            <person name="Karasawa T."/>
            <person name="Suvorov A.N."/>
            <person name="Lin S."/>
            <person name="Qin B."/>
            <person name="Jia H."/>
            <person name="Kenton S."/>
            <person name="Najar F."/>
            <person name="Wu H."/>
            <person name="Scott J."/>
            <person name="Roe B.A."/>
            <person name="Savic D.J."/>
        </authorList>
    </citation>
    <scope>NUCLEOTIDE SEQUENCE [LARGE SCALE GENOMIC DNA]</scope>
    <source>
        <strain>NZ131</strain>
    </source>
</reference>
<accession>B5XKP3</accession>
<organism>
    <name type="scientific">Streptococcus pyogenes serotype M49 (strain NZ131)</name>
    <dbReference type="NCBI Taxonomy" id="471876"/>
    <lineage>
        <taxon>Bacteria</taxon>
        <taxon>Bacillati</taxon>
        <taxon>Bacillota</taxon>
        <taxon>Bacilli</taxon>
        <taxon>Lactobacillales</taxon>
        <taxon>Streptococcaceae</taxon>
        <taxon>Streptococcus</taxon>
    </lineage>
</organism>
<sequence>MKKRIKELTDLLNRYRYDYYTKDAPSVSDSDYDKLYRELVTLEQSYPEYVLQDSPTQQVGGTILKGFEKYRHQYPLFSLQDAFSREELDAFDKRVKAEFPNATYLAELKIDGLSISLSYENGFLQVGATRGDGNIGENITENIKKIKDIPHQLSEPLTITVRGEAYMSRQSFKAINEARQENGETEFANPRNAAAGTLRQLDTAVVAKRELATFLYQEASPTARNQQNEVLAELADLGFSVNPYYQLTSSMDEIWDFIKTIEAKRDQLAYDIDGVVIKVNSLAMQEELGFTVKAPRWAIAYKFPAEEKEAEILSVDWTVGRTGVVTPTANLTPVQLAGTTVSRATLHNVDYIAEKDIRIGDTVIVYKAGDIIPAVLNVVMSKRNQQEVMLIPKLCPSCGSELVHFEDEVALRCINPLCPSLIQRSLEHFASRDAMNITGLGPAIVEKLFLAGFVHDVADIYQLTKENFMQLDGIKEKSADKLLAAIEASKSNSAEKLLFGLGIRHIGSKVSRLILEVYGDISALLTAKEEEIARIDGLGSTIAQSLTQYFEQKTAAILVDELKTAGVNMHYSGQKVNSDAALFGLTVVLTGKLNQLNRNEAKDKLEALGAKVTGSVSKKTDLVIAGSDAGSKLEKAKSLGIRIEDEDWLRQL</sequence>
<comment type="function">
    <text evidence="1">DNA ligase that catalyzes the formation of phosphodiester linkages between 5'-phosphoryl and 3'-hydroxyl groups in double-stranded DNA using NAD as a coenzyme and as the energy source for the reaction. It is essential for DNA replication and repair of damaged DNA.</text>
</comment>
<comment type="catalytic activity">
    <reaction evidence="1">
        <text>NAD(+) + (deoxyribonucleotide)n-3'-hydroxyl + 5'-phospho-(deoxyribonucleotide)m = (deoxyribonucleotide)n+m + AMP + beta-nicotinamide D-nucleotide.</text>
        <dbReference type="EC" id="6.5.1.2"/>
    </reaction>
</comment>
<comment type="cofactor">
    <cofactor evidence="1">
        <name>Mg(2+)</name>
        <dbReference type="ChEBI" id="CHEBI:18420"/>
    </cofactor>
    <cofactor evidence="1">
        <name>Mn(2+)</name>
        <dbReference type="ChEBI" id="CHEBI:29035"/>
    </cofactor>
</comment>
<comment type="similarity">
    <text evidence="1">Belongs to the NAD-dependent DNA ligase family. LigA subfamily.</text>
</comment>
<proteinExistence type="inferred from homology"/>
<name>DNLJ_STRPZ</name>
<gene>
    <name evidence="1" type="primary">ligA</name>
    <name type="ordered locus">Spy49_0580</name>
</gene>
<feature type="chain" id="PRO_0000380484" description="DNA ligase">
    <location>
        <begin position="1"/>
        <end position="652"/>
    </location>
</feature>
<feature type="domain" description="BRCT" evidence="1">
    <location>
        <begin position="577"/>
        <end position="652"/>
    </location>
</feature>
<feature type="active site" description="N6-AMP-lysine intermediate" evidence="1">
    <location>
        <position position="109"/>
    </location>
</feature>
<feature type="binding site" evidence="1">
    <location>
        <begin position="29"/>
        <end position="33"/>
    </location>
    <ligand>
        <name>NAD(+)</name>
        <dbReference type="ChEBI" id="CHEBI:57540"/>
    </ligand>
</feature>
<feature type="binding site" evidence="1">
    <location>
        <begin position="78"/>
        <end position="79"/>
    </location>
    <ligand>
        <name>NAD(+)</name>
        <dbReference type="ChEBI" id="CHEBI:57540"/>
    </ligand>
</feature>
<feature type="binding site" evidence="1">
    <location>
        <position position="107"/>
    </location>
    <ligand>
        <name>NAD(+)</name>
        <dbReference type="ChEBI" id="CHEBI:57540"/>
    </ligand>
</feature>
<feature type="binding site" evidence="1">
    <location>
        <position position="130"/>
    </location>
    <ligand>
        <name>NAD(+)</name>
        <dbReference type="ChEBI" id="CHEBI:57540"/>
    </ligand>
</feature>
<feature type="binding site" evidence="1">
    <location>
        <position position="164"/>
    </location>
    <ligand>
        <name>NAD(+)</name>
        <dbReference type="ChEBI" id="CHEBI:57540"/>
    </ligand>
</feature>
<feature type="binding site" evidence="1">
    <location>
        <position position="278"/>
    </location>
    <ligand>
        <name>NAD(+)</name>
        <dbReference type="ChEBI" id="CHEBI:57540"/>
    </ligand>
</feature>
<feature type="binding site" evidence="1">
    <location>
        <position position="302"/>
    </location>
    <ligand>
        <name>NAD(+)</name>
        <dbReference type="ChEBI" id="CHEBI:57540"/>
    </ligand>
</feature>
<feature type="binding site" evidence="1">
    <location>
        <position position="395"/>
    </location>
    <ligand>
        <name>Zn(2+)</name>
        <dbReference type="ChEBI" id="CHEBI:29105"/>
    </ligand>
</feature>
<feature type="binding site" evidence="1">
    <location>
        <position position="398"/>
    </location>
    <ligand>
        <name>Zn(2+)</name>
        <dbReference type="ChEBI" id="CHEBI:29105"/>
    </ligand>
</feature>
<feature type="binding site" evidence="1">
    <location>
        <position position="413"/>
    </location>
    <ligand>
        <name>Zn(2+)</name>
        <dbReference type="ChEBI" id="CHEBI:29105"/>
    </ligand>
</feature>
<feature type="binding site" evidence="1">
    <location>
        <position position="418"/>
    </location>
    <ligand>
        <name>Zn(2+)</name>
        <dbReference type="ChEBI" id="CHEBI:29105"/>
    </ligand>
</feature>
<dbReference type="EC" id="6.5.1.2" evidence="1"/>
<dbReference type="EMBL" id="CP000829">
    <property type="protein sequence ID" value="ACI60905.1"/>
    <property type="molecule type" value="Genomic_DNA"/>
</dbReference>
<dbReference type="SMR" id="B5XKP3"/>
<dbReference type="KEGG" id="soz:Spy49_0580"/>
<dbReference type="HOGENOM" id="CLU_007764_2_1_9"/>
<dbReference type="Proteomes" id="UP000001039">
    <property type="component" value="Chromosome"/>
</dbReference>
<dbReference type="GO" id="GO:0005829">
    <property type="term" value="C:cytosol"/>
    <property type="evidence" value="ECO:0007669"/>
    <property type="project" value="TreeGrafter"/>
</dbReference>
<dbReference type="GO" id="GO:0003677">
    <property type="term" value="F:DNA binding"/>
    <property type="evidence" value="ECO:0007669"/>
    <property type="project" value="InterPro"/>
</dbReference>
<dbReference type="GO" id="GO:0003911">
    <property type="term" value="F:DNA ligase (NAD+) activity"/>
    <property type="evidence" value="ECO:0007669"/>
    <property type="project" value="UniProtKB-UniRule"/>
</dbReference>
<dbReference type="GO" id="GO:0046872">
    <property type="term" value="F:metal ion binding"/>
    <property type="evidence" value="ECO:0007669"/>
    <property type="project" value="UniProtKB-KW"/>
</dbReference>
<dbReference type="GO" id="GO:0006281">
    <property type="term" value="P:DNA repair"/>
    <property type="evidence" value="ECO:0007669"/>
    <property type="project" value="UniProtKB-KW"/>
</dbReference>
<dbReference type="GO" id="GO:0006260">
    <property type="term" value="P:DNA replication"/>
    <property type="evidence" value="ECO:0007669"/>
    <property type="project" value="UniProtKB-KW"/>
</dbReference>
<dbReference type="CDD" id="cd17748">
    <property type="entry name" value="BRCT_DNA_ligase_like"/>
    <property type="match status" value="1"/>
</dbReference>
<dbReference type="CDD" id="cd00114">
    <property type="entry name" value="LIGANc"/>
    <property type="match status" value="1"/>
</dbReference>
<dbReference type="FunFam" id="1.10.150.20:FF:000007">
    <property type="entry name" value="DNA ligase"/>
    <property type="match status" value="1"/>
</dbReference>
<dbReference type="FunFam" id="1.10.287.610:FF:000002">
    <property type="entry name" value="DNA ligase"/>
    <property type="match status" value="1"/>
</dbReference>
<dbReference type="FunFam" id="2.40.50.140:FF:000012">
    <property type="entry name" value="DNA ligase"/>
    <property type="match status" value="1"/>
</dbReference>
<dbReference type="FunFam" id="3.30.470.30:FF:000001">
    <property type="entry name" value="DNA ligase"/>
    <property type="match status" value="1"/>
</dbReference>
<dbReference type="Gene3D" id="6.20.10.30">
    <property type="match status" value="1"/>
</dbReference>
<dbReference type="Gene3D" id="1.10.150.20">
    <property type="entry name" value="5' to 3' exonuclease, C-terminal subdomain"/>
    <property type="match status" value="2"/>
</dbReference>
<dbReference type="Gene3D" id="3.40.50.10190">
    <property type="entry name" value="BRCT domain"/>
    <property type="match status" value="1"/>
</dbReference>
<dbReference type="Gene3D" id="3.30.470.30">
    <property type="entry name" value="DNA ligase/mRNA capping enzyme"/>
    <property type="match status" value="1"/>
</dbReference>
<dbReference type="Gene3D" id="1.10.287.610">
    <property type="entry name" value="Helix hairpin bin"/>
    <property type="match status" value="1"/>
</dbReference>
<dbReference type="Gene3D" id="2.40.50.140">
    <property type="entry name" value="Nucleic acid-binding proteins"/>
    <property type="match status" value="1"/>
</dbReference>
<dbReference type="HAMAP" id="MF_01588">
    <property type="entry name" value="DNA_ligase_A"/>
    <property type="match status" value="1"/>
</dbReference>
<dbReference type="InterPro" id="IPR001357">
    <property type="entry name" value="BRCT_dom"/>
</dbReference>
<dbReference type="InterPro" id="IPR036420">
    <property type="entry name" value="BRCT_dom_sf"/>
</dbReference>
<dbReference type="InterPro" id="IPR041663">
    <property type="entry name" value="DisA/LigA_HHH"/>
</dbReference>
<dbReference type="InterPro" id="IPR001679">
    <property type="entry name" value="DNA_ligase"/>
</dbReference>
<dbReference type="InterPro" id="IPR018239">
    <property type="entry name" value="DNA_ligase_AS"/>
</dbReference>
<dbReference type="InterPro" id="IPR033136">
    <property type="entry name" value="DNA_ligase_CS"/>
</dbReference>
<dbReference type="InterPro" id="IPR013839">
    <property type="entry name" value="DNAligase_adenylation"/>
</dbReference>
<dbReference type="InterPro" id="IPR013840">
    <property type="entry name" value="DNAligase_N"/>
</dbReference>
<dbReference type="InterPro" id="IPR003583">
    <property type="entry name" value="Hlx-hairpin-Hlx_DNA-bd_motif"/>
</dbReference>
<dbReference type="InterPro" id="IPR012340">
    <property type="entry name" value="NA-bd_OB-fold"/>
</dbReference>
<dbReference type="InterPro" id="IPR004150">
    <property type="entry name" value="NAD_DNA_ligase_OB"/>
</dbReference>
<dbReference type="InterPro" id="IPR010994">
    <property type="entry name" value="RuvA_2-like"/>
</dbReference>
<dbReference type="InterPro" id="IPR004149">
    <property type="entry name" value="Znf_DNAligase_C4"/>
</dbReference>
<dbReference type="NCBIfam" id="TIGR00575">
    <property type="entry name" value="dnlj"/>
    <property type="match status" value="1"/>
</dbReference>
<dbReference type="NCBIfam" id="NF005932">
    <property type="entry name" value="PRK07956.1"/>
    <property type="match status" value="1"/>
</dbReference>
<dbReference type="PANTHER" id="PTHR23389">
    <property type="entry name" value="CHROMOSOME TRANSMISSION FIDELITY FACTOR 18"/>
    <property type="match status" value="1"/>
</dbReference>
<dbReference type="PANTHER" id="PTHR23389:SF9">
    <property type="entry name" value="DNA LIGASE"/>
    <property type="match status" value="1"/>
</dbReference>
<dbReference type="Pfam" id="PF00533">
    <property type="entry name" value="BRCT"/>
    <property type="match status" value="1"/>
</dbReference>
<dbReference type="Pfam" id="PF01653">
    <property type="entry name" value="DNA_ligase_aden"/>
    <property type="match status" value="1"/>
</dbReference>
<dbReference type="Pfam" id="PF03120">
    <property type="entry name" value="DNA_ligase_OB"/>
    <property type="match status" value="1"/>
</dbReference>
<dbReference type="Pfam" id="PF03119">
    <property type="entry name" value="DNA_ligase_ZBD"/>
    <property type="match status" value="1"/>
</dbReference>
<dbReference type="Pfam" id="PF12826">
    <property type="entry name" value="HHH_2"/>
    <property type="match status" value="1"/>
</dbReference>
<dbReference type="Pfam" id="PF14520">
    <property type="entry name" value="HHH_5"/>
    <property type="match status" value="1"/>
</dbReference>
<dbReference type="PIRSF" id="PIRSF001604">
    <property type="entry name" value="LigA"/>
    <property type="match status" value="1"/>
</dbReference>
<dbReference type="SMART" id="SM00292">
    <property type="entry name" value="BRCT"/>
    <property type="match status" value="1"/>
</dbReference>
<dbReference type="SMART" id="SM00278">
    <property type="entry name" value="HhH1"/>
    <property type="match status" value="3"/>
</dbReference>
<dbReference type="SMART" id="SM00532">
    <property type="entry name" value="LIGANc"/>
    <property type="match status" value="1"/>
</dbReference>
<dbReference type="SUPFAM" id="SSF52113">
    <property type="entry name" value="BRCT domain"/>
    <property type="match status" value="1"/>
</dbReference>
<dbReference type="SUPFAM" id="SSF56091">
    <property type="entry name" value="DNA ligase/mRNA capping enzyme, catalytic domain"/>
    <property type="match status" value="1"/>
</dbReference>
<dbReference type="SUPFAM" id="SSF50249">
    <property type="entry name" value="Nucleic acid-binding proteins"/>
    <property type="match status" value="1"/>
</dbReference>
<dbReference type="SUPFAM" id="SSF47781">
    <property type="entry name" value="RuvA domain 2-like"/>
    <property type="match status" value="1"/>
</dbReference>
<dbReference type="PROSITE" id="PS50172">
    <property type="entry name" value="BRCT"/>
    <property type="match status" value="1"/>
</dbReference>
<dbReference type="PROSITE" id="PS01055">
    <property type="entry name" value="DNA_LIGASE_N1"/>
    <property type="match status" value="1"/>
</dbReference>
<dbReference type="PROSITE" id="PS01056">
    <property type="entry name" value="DNA_LIGASE_N2"/>
    <property type="match status" value="1"/>
</dbReference>
<protein>
    <recommendedName>
        <fullName evidence="1">DNA ligase</fullName>
        <ecNumber evidence="1">6.5.1.2</ecNumber>
    </recommendedName>
    <alternativeName>
        <fullName evidence="1">Polydeoxyribonucleotide synthase [NAD(+)]</fullName>
    </alternativeName>
</protein>
<evidence type="ECO:0000255" key="1">
    <source>
        <dbReference type="HAMAP-Rule" id="MF_01588"/>
    </source>
</evidence>